<sequence length="152" mass="16961">MTDLTLIFISLSGNTLSFVRRLSQYLAEKHHIQTKTINIKELHHETFPVMESFVAILPTYLEGGNGIDSGKVEILTNPLGDFIAAHDNVKHCLGIIGSGNKNFNHQYCLTAKQYAKRFGFPMLGDFELRGTNADIERLAQVIVARLTADQQS</sequence>
<proteinExistence type="inferred from homology"/>
<gene>
    <name type="ordered locus">spyM18_2048</name>
</gene>
<name>NRDIL_STRP8</name>
<evidence type="ECO:0000305" key="1"/>
<organism>
    <name type="scientific">Streptococcus pyogenes serotype M18 (strain MGAS8232)</name>
    <dbReference type="NCBI Taxonomy" id="186103"/>
    <lineage>
        <taxon>Bacteria</taxon>
        <taxon>Bacillati</taxon>
        <taxon>Bacillota</taxon>
        <taxon>Bacilli</taxon>
        <taxon>Lactobacillales</taxon>
        <taxon>Streptococcaceae</taxon>
        <taxon>Streptococcus</taxon>
    </lineage>
</organism>
<protein>
    <recommendedName>
        <fullName>Putative NrdI-like protein</fullName>
    </recommendedName>
</protein>
<reference key="1">
    <citation type="journal article" date="2002" name="Proc. Natl. Acad. Sci. U.S.A.">
        <title>Genome sequence and comparative microarray analysis of serotype M18 group A Streptococcus strains associated with acute rheumatic fever outbreaks.</title>
        <authorList>
            <person name="Smoot J.C."/>
            <person name="Barbian K.D."/>
            <person name="Van Gompel J.J."/>
            <person name="Smoot L.M."/>
            <person name="Chaussee M.S."/>
            <person name="Sylva G.L."/>
            <person name="Sturdevant D.E."/>
            <person name="Ricklefs S.M."/>
            <person name="Porcella S.F."/>
            <person name="Parkins L.D."/>
            <person name="Beres S.B."/>
            <person name="Campbell D.S."/>
            <person name="Smith T.M."/>
            <person name="Zhang Q."/>
            <person name="Kapur V."/>
            <person name="Daly J.A."/>
            <person name="Veasy L.G."/>
            <person name="Musser J.M."/>
        </authorList>
    </citation>
    <scope>NUCLEOTIDE SEQUENCE [LARGE SCALE GENOMIC DNA]</scope>
    <source>
        <strain>MGAS8232</strain>
    </source>
</reference>
<dbReference type="EMBL" id="AE009949">
    <property type="protein sequence ID" value="AAL98522.1"/>
    <property type="molecule type" value="Genomic_DNA"/>
</dbReference>
<dbReference type="SMR" id="Q8NZA2"/>
<dbReference type="KEGG" id="spm:spyM18_2048"/>
<dbReference type="HOGENOM" id="CLU_114845_1_0_9"/>
<dbReference type="GO" id="GO:0010181">
    <property type="term" value="F:FMN binding"/>
    <property type="evidence" value="ECO:0007669"/>
    <property type="project" value="InterPro"/>
</dbReference>
<dbReference type="GO" id="GO:0036211">
    <property type="term" value="P:protein modification process"/>
    <property type="evidence" value="ECO:0007669"/>
    <property type="project" value="InterPro"/>
</dbReference>
<dbReference type="Gene3D" id="3.40.50.360">
    <property type="match status" value="1"/>
</dbReference>
<dbReference type="InterPro" id="IPR029039">
    <property type="entry name" value="Flavoprotein-like_sf"/>
</dbReference>
<dbReference type="InterPro" id="IPR004465">
    <property type="entry name" value="RNR_NrdI"/>
</dbReference>
<dbReference type="NCBIfam" id="NF002714">
    <property type="entry name" value="PRK02551.1"/>
    <property type="match status" value="1"/>
</dbReference>
<dbReference type="PANTHER" id="PTHR37297">
    <property type="entry name" value="PROTEIN NRDI"/>
    <property type="match status" value="1"/>
</dbReference>
<dbReference type="PANTHER" id="PTHR37297:SF1">
    <property type="entry name" value="PROTEIN NRDI"/>
    <property type="match status" value="1"/>
</dbReference>
<dbReference type="Pfam" id="PF07972">
    <property type="entry name" value="Flavodoxin_NdrI"/>
    <property type="match status" value="1"/>
</dbReference>
<dbReference type="PIRSF" id="PIRSF005087">
    <property type="entry name" value="NrdI"/>
    <property type="match status" value="1"/>
</dbReference>
<dbReference type="SUPFAM" id="SSF52218">
    <property type="entry name" value="Flavoproteins"/>
    <property type="match status" value="1"/>
</dbReference>
<feature type="chain" id="PRO_0000164355" description="Putative NrdI-like protein">
    <location>
        <begin position="1"/>
        <end position="152"/>
    </location>
</feature>
<accession>Q8NZA2</accession>
<comment type="similarity">
    <text evidence="1">Belongs to the NrdI family.</text>
</comment>